<sequence>MKSLKQQKIAVLLGGTASEREVSLNSGAAVLDALRSQGYDAHPVDPKDMPVADLKQQGFERVFNILHGRGGEDGVIQGVLEQIGLPYTGCGVMTSALTMDKMRTKMLWKGFGLPIADMEIVTKNTALSLEPQAIVARLGLPLMVKPSREGSSVGLTKVDSADKLKSAVDLALKFDDIVLIEEWLSGDELTVPVLGDEVLPAVQIVPEGEFYDYNAKYISDNTRYICPMPMSDERWDELKNLVKRAYEAVGCRGWSRIDVMTDSEGNFRLIEVNTTPGMTSHSLFPKSAATVGYSFEKLVEKILELSV</sequence>
<keyword id="KW-0067">ATP-binding</keyword>
<keyword id="KW-0133">Cell shape</keyword>
<keyword id="KW-0961">Cell wall biogenesis/degradation</keyword>
<keyword id="KW-0963">Cytoplasm</keyword>
<keyword id="KW-0436">Ligase</keyword>
<keyword id="KW-0460">Magnesium</keyword>
<keyword id="KW-0464">Manganese</keyword>
<keyword id="KW-0479">Metal-binding</keyword>
<keyword id="KW-0547">Nucleotide-binding</keyword>
<keyword id="KW-0573">Peptidoglycan synthesis</keyword>
<keyword id="KW-1185">Reference proteome</keyword>
<protein>
    <recommendedName>
        <fullName evidence="2">D-alanine--D-alanine ligase</fullName>
        <ecNumber evidence="2">6.3.2.4</ecNumber>
    </recommendedName>
    <alternativeName>
        <fullName evidence="2">D-Ala-D-Ala ligase</fullName>
    </alternativeName>
    <alternativeName>
        <fullName evidence="2">D-alanylalanine synthetase</fullName>
    </alternativeName>
</protein>
<reference key="1">
    <citation type="journal article" date="2010" name="BMC Genomics">
        <title>A genomic perspective on the potential of Actinobacillus succinogenes for industrial succinate production.</title>
        <authorList>
            <person name="McKinlay J.B."/>
            <person name="Laivenieks M."/>
            <person name="Schindler B.D."/>
            <person name="McKinlay A.A."/>
            <person name="Siddaramappa S."/>
            <person name="Challacombe J.F."/>
            <person name="Lowry S.R."/>
            <person name="Clum A."/>
            <person name="Lapidus A.L."/>
            <person name="Burkhart K.B."/>
            <person name="Harkins V."/>
            <person name="Vieille C."/>
        </authorList>
    </citation>
    <scope>NUCLEOTIDE SEQUENCE [LARGE SCALE GENOMIC DNA]</scope>
    <source>
        <strain>ATCC 55618 / DSM 22257 / CCUG 43843 / 130Z</strain>
    </source>
</reference>
<name>DDL_ACTSZ</name>
<gene>
    <name evidence="2" type="primary">ddl</name>
    <name type="ordered locus">Asuc_1930</name>
</gene>
<feature type="chain" id="PRO_1000071100" description="D-alanine--D-alanine ligase">
    <location>
        <begin position="1"/>
        <end position="307"/>
    </location>
</feature>
<feature type="domain" description="ATP-grasp" evidence="2">
    <location>
        <begin position="105"/>
        <end position="304"/>
    </location>
</feature>
<feature type="binding site" evidence="2">
    <location>
        <begin position="135"/>
        <end position="190"/>
    </location>
    <ligand>
        <name>ATP</name>
        <dbReference type="ChEBI" id="CHEBI:30616"/>
    </ligand>
</feature>
<feature type="binding site" evidence="2">
    <location>
        <position position="258"/>
    </location>
    <ligand>
        <name>Mg(2+)</name>
        <dbReference type="ChEBI" id="CHEBI:18420"/>
        <label>1</label>
    </ligand>
</feature>
<feature type="binding site" evidence="2">
    <location>
        <position position="271"/>
    </location>
    <ligand>
        <name>Mg(2+)</name>
        <dbReference type="ChEBI" id="CHEBI:18420"/>
        <label>1</label>
    </ligand>
</feature>
<feature type="binding site" evidence="2">
    <location>
        <position position="271"/>
    </location>
    <ligand>
        <name>Mg(2+)</name>
        <dbReference type="ChEBI" id="CHEBI:18420"/>
        <label>2</label>
    </ligand>
</feature>
<feature type="binding site" evidence="2">
    <location>
        <position position="273"/>
    </location>
    <ligand>
        <name>Mg(2+)</name>
        <dbReference type="ChEBI" id="CHEBI:18420"/>
        <label>2</label>
    </ligand>
</feature>
<proteinExistence type="inferred from homology"/>
<comment type="function">
    <text evidence="2">Cell wall formation.</text>
</comment>
<comment type="catalytic activity">
    <reaction evidence="2">
        <text>2 D-alanine + ATP = D-alanyl-D-alanine + ADP + phosphate + H(+)</text>
        <dbReference type="Rhea" id="RHEA:11224"/>
        <dbReference type="ChEBI" id="CHEBI:15378"/>
        <dbReference type="ChEBI" id="CHEBI:30616"/>
        <dbReference type="ChEBI" id="CHEBI:43474"/>
        <dbReference type="ChEBI" id="CHEBI:57416"/>
        <dbReference type="ChEBI" id="CHEBI:57822"/>
        <dbReference type="ChEBI" id="CHEBI:456216"/>
        <dbReference type="EC" id="6.3.2.4"/>
    </reaction>
</comment>
<comment type="cofactor">
    <cofactor evidence="1">
        <name>Mg(2+)</name>
        <dbReference type="ChEBI" id="CHEBI:18420"/>
    </cofactor>
    <cofactor evidence="1">
        <name>Mn(2+)</name>
        <dbReference type="ChEBI" id="CHEBI:29035"/>
    </cofactor>
    <text evidence="1">Binds 2 magnesium or manganese ions per subunit.</text>
</comment>
<comment type="pathway">
    <text evidence="2">Cell wall biogenesis; peptidoglycan biosynthesis.</text>
</comment>
<comment type="subcellular location">
    <subcellularLocation>
        <location evidence="2">Cytoplasm</location>
    </subcellularLocation>
</comment>
<comment type="similarity">
    <text evidence="2">Belongs to the D-alanine--D-alanine ligase family.</text>
</comment>
<organism>
    <name type="scientific">Actinobacillus succinogenes (strain ATCC 55618 / DSM 22257 / CCUG 43843 / 130Z)</name>
    <dbReference type="NCBI Taxonomy" id="339671"/>
    <lineage>
        <taxon>Bacteria</taxon>
        <taxon>Pseudomonadati</taxon>
        <taxon>Pseudomonadota</taxon>
        <taxon>Gammaproteobacteria</taxon>
        <taxon>Pasteurellales</taxon>
        <taxon>Pasteurellaceae</taxon>
        <taxon>Actinobacillus</taxon>
    </lineage>
</organism>
<dbReference type="EC" id="6.3.2.4" evidence="2"/>
<dbReference type="EMBL" id="CP000746">
    <property type="protein sequence ID" value="ABR75278.1"/>
    <property type="molecule type" value="Genomic_DNA"/>
</dbReference>
<dbReference type="RefSeq" id="WP_012073655.1">
    <property type="nucleotide sequence ID" value="NC_009655.1"/>
</dbReference>
<dbReference type="SMR" id="A6VQN1"/>
<dbReference type="STRING" id="339671.Asuc_1930"/>
<dbReference type="KEGG" id="asu:Asuc_1930"/>
<dbReference type="eggNOG" id="COG1181">
    <property type="taxonomic scope" value="Bacteria"/>
</dbReference>
<dbReference type="HOGENOM" id="CLU_039268_1_2_6"/>
<dbReference type="OrthoDB" id="9813261at2"/>
<dbReference type="UniPathway" id="UPA00219"/>
<dbReference type="Proteomes" id="UP000001114">
    <property type="component" value="Chromosome"/>
</dbReference>
<dbReference type="GO" id="GO:0005829">
    <property type="term" value="C:cytosol"/>
    <property type="evidence" value="ECO:0007669"/>
    <property type="project" value="TreeGrafter"/>
</dbReference>
<dbReference type="GO" id="GO:0005524">
    <property type="term" value="F:ATP binding"/>
    <property type="evidence" value="ECO:0007669"/>
    <property type="project" value="UniProtKB-KW"/>
</dbReference>
<dbReference type="GO" id="GO:0008716">
    <property type="term" value="F:D-alanine-D-alanine ligase activity"/>
    <property type="evidence" value="ECO:0007669"/>
    <property type="project" value="UniProtKB-UniRule"/>
</dbReference>
<dbReference type="GO" id="GO:0046872">
    <property type="term" value="F:metal ion binding"/>
    <property type="evidence" value="ECO:0007669"/>
    <property type="project" value="UniProtKB-KW"/>
</dbReference>
<dbReference type="GO" id="GO:0071555">
    <property type="term" value="P:cell wall organization"/>
    <property type="evidence" value="ECO:0007669"/>
    <property type="project" value="UniProtKB-KW"/>
</dbReference>
<dbReference type="GO" id="GO:0009252">
    <property type="term" value="P:peptidoglycan biosynthetic process"/>
    <property type="evidence" value="ECO:0007669"/>
    <property type="project" value="UniProtKB-UniRule"/>
</dbReference>
<dbReference type="GO" id="GO:0008360">
    <property type="term" value="P:regulation of cell shape"/>
    <property type="evidence" value="ECO:0007669"/>
    <property type="project" value="UniProtKB-KW"/>
</dbReference>
<dbReference type="FunFam" id="3.30.1490.20:FF:000007">
    <property type="entry name" value="D-alanine--D-alanine ligase"/>
    <property type="match status" value="1"/>
</dbReference>
<dbReference type="FunFam" id="3.30.470.20:FF:000008">
    <property type="entry name" value="D-alanine--D-alanine ligase"/>
    <property type="match status" value="1"/>
</dbReference>
<dbReference type="FunFam" id="3.40.50.20:FF:000013">
    <property type="entry name" value="D-alanine--D-alanine ligase"/>
    <property type="match status" value="1"/>
</dbReference>
<dbReference type="Gene3D" id="3.40.50.20">
    <property type="match status" value="1"/>
</dbReference>
<dbReference type="Gene3D" id="3.30.1490.20">
    <property type="entry name" value="ATP-grasp fold, A domain"/>
    <property type="match status" value="1"/>
</dbReference>
<dbReference type="Gene3D" id="3.30.470.20">
    <property type="entry name" value="ATP-grasp fold, B domain"/>
    <property type="match status" value="1"/>
</dbReference>
<dbReference type="HAMAP" id="MF_00047">
    <property type="entry name" value="Dala_Dala_lig"/>
    <property type="match status" value="1"/>
</dbReference>
<dbReference type="InterPro" id="IPR011761">
    <property type="entry name" value="ATP-grasp"/>
</dbReference>
<dbReference type="InterPro" id="IPR013815">
    <property type="entry name" value="ATP_grasp_subdomain_1"/>
</dbReference>
<dbReference type="InterPro" id="IPR000291">
    <property type="entry name" value="D-Ala_lig_Van_CS"/>
</dbReference>
<dbReference type="InterPro" id="IPR005905">
    <property type="entry name" value="D_ala_D_ala"/>
</dbReference>
<dbReference type="InterPro" id="IPR011095">
    <property type="entry name" value="Dala_Dala_lig_C"/>
</dbReference>
<dbReference type="InterPro" id="IPR011127">
    <property type="entry name" value="Dala_Dala_lig_N"/>
</dbReference>
<dbReference type="InterPro" id="IPR016185">
    <property type="entry name" value="PreATP-grasp_dom_sf"/>
</dbReference>
<dbReference type="NCBIfam" id="TIGR01205">
    <property type="entry name" value="D_ala_D_alaTIGR"/>
    <property type="match status" value="1"/>
</dbReference>
<dbReference type="NCBIfam" id="NF002378">
    <property type="entry name" value="PRK01372.1"/>
    <property type="match status" value="1"/>
</dbReference>
<dbReference type="PANTHER" id="PTHR23132">
    <property type="entry name" value="D-ALANINE--D-ALANINE LIGASE"/>
    <property type="match status" value="1"/>
</dbReference>
<dbReference type="PANTHER" id="PTHR23132:SF23">
    <property type="entry name" value="D-ALANINE--D-ALANINE LIGASE B"/>
    <property type="match status" value="1"/>
</dbReference>
<dbReference type="Pfam" id="PF07478">
    <property type="entry name" value="Dala_Dala_lig_C"/>
    <property type="match status" value="1"/>
</dbReference>
<dbReference type="Pfam" id="PF01820">
    <property type="entry name" value="Dala_Dala_lig_N"/>
    <property type="match status" value="1"/>
</dbReference>
<dbReference type="PIRSF" id="PIRSF039102">
    <property type="entry name" value="Ddl/VanB"/>
    <property type="match status" value="1"/>
</dbReference>
<dbReference type="SUPFAM" id="SSF56059">
    <property type="entry name" value="Glutathione synthetase ATP-binding domain-like"/>
    <property type="match status" value="1"/>
</dbReference>
<dbReference type="SUPFAM" id="SSF52440">
    <property type="entry name" value="PreATP-grasp domain"/>
    <property type="match status" value="1"/>
</dbReference>
<dbReference type="PROSITE" id="PS50975">
    <property type="entry name" value="ATP_GRASP"/>
    <property type="match status" value="1"/>
</dbReference>
<dbReference type="PROSITE" id="PS00843">
    <property type="entry name" value="DALA_DALA_LIGASE_1"/>
    <property type="match status" value="1"/>
</dbReference>
<dbReference type="PROSITE" id="PS00844">
    <property type="entry name" value="DALA_DALA_LIGASE_2"/>
    <property type="match status" value="1"/>
</dbReference>
<accession>A6VQN1</accession>
<evidence type="ECO:0000250" key="1"/>
<evidence type="ECO:0000255" key="2">
    <source>
        <dbReference type="HAMAP-Rule" id="MF_00047"/>
    </source>
</evidence>